<comment type="function">
    <text evidence="5 6 7">Macromolecular component of the subendothelium. Major component of the Descemet's membrane (basement membrane) of corneal endothelial cells. Also a component of the endothelia of blood vessels. Necessary for migration and proliferation of vascular smooth muscle cells and thus, has a potential role in the maintenance of vessel wall integrity and structure, in particular in atherogenesis.</text>
</comment>
<comment type="function">
    <text evidence="1">Vastatin, the C-terminal fragment comprising the NC1 domain, inhibits aortic endothelial cell proliferation and causes cell apoptosis.</text>
</comment>
<comment type="subunit">
    <text evidence="1">Homotrimers, or heterotrimers in association with alpha 2(VIII) type collagens. Four homotrimers can form a tetrahedron stabilized by central interacting C-terminal NC1 trimers (By similarity).</text>
</comment>
<comment type="subcellular location">
    <subcellularLocation>
        <location>Secreted</location>
        <location>Extracellular space</location>
        <location>Extracellular matrix</location>
        <location>Basement membrane</location>
    </subcellularLocation>
</comment>
<comment type="tissue specificity">
    <text evidence="5 7">High levels in calvarium, eye and skin of newborn mice; also in various epithelial, endothelial and mesenchymal cells.</text>
</comment>
<comment type="induction">
    <text evidence="5 7">Up-regulated in astrocytes during the repair process and in mesangial cells in diabetic animals.</text>
</comment>
<comment type="PTM">
    <text>Prolines at the third position of the tripeptide repeating unit (G-X-Y) are hydroxylated in some or all of the chains.</text>
</comment>
<comment type="PTM">
    <text evidence="1">Proteolytically cleaved by neutrophil elastase, in vitro. Proteolytic processing produces the C-terminal NC1 domain fragment, vastatin (By similarity).</text>
</comment>
<comment type="disruption phenotype">
    <text evidence="7">COL8A1(-)/COL8A2(-) mice exhibit decreased proliferation of measngial cells, reduced phosphorylation of ERK1/2 and increased p27(KIP1) expression. Diabetic COL8A1(-)/COL8A2(-) mice reveal reduced mesangial expansion and cellularity and extracellular matrix expansion.</text>
</comment>
<feature type="signal peptide" evidence="2">
    <location>
        <begin position="1"/>
        <end position="24"/>
    </location>
</feature>
<feature type="chain" id="PRO_0000005763" description="Collagen alpha-1(VIII) chain">
    <location>
        <begin position="25"/>
        <end position="744"/>
    </location>
</feature>
<feature type="chain" id="PRO_0000390485" description="Vastatin">
    <location>
        <begin position="573"/>
        <end position="744"/>
    </location>
</feature>
<feature type="domain" description="C1q" evidence="3">
    <location>
        <begin position="611"/>
        <end position="744"/>
    </location>
</feature>
<feature type="region of interest" description="Nonhelical region (NC2)">
    <location>
        <begin position="29"/>
        <end position="118"/>
    </location>
</feature>
<feature type="region of interest" description="Disordered" evidence="4">
    <location>
        <begin position="101"/>
        <end position="395"/>
    </location>
</feature>
<feature type="region of interest" description="Triple-helical region (COL1)">
    <location>
        <begin position="119"/>
        <end position="572"/>
    </location>
</feature>
<feature type="region of interest" description="Disordered" evidence="4">
    <location>
        <begin position="412"/>
        <end position="439"/>
    </location>
</feature>
<feature type="region of interest" description="Disordered" evidence="4">
    <location>
        <begin position="457"/>
        <end position="590"/>
    </location>
</feature>
<feature type="region of interest" description="Nonhelical region (NC1)">
    <location>
        <begin position="573"/>
        <end position="744"/>
    </location>
</feature>
<feature type="compositionally biased region" description="Basic and acidic residues" evidence="4">
    <location>
        <begin position="101"/>
        <end position="110"/>
    </location>
</feature>
<feature type="compositionally biased region" description="Pro residues" evidence="4">
    <location>
        <begin position="129"/>
        <end position="138"/>
    </location>
</feature>
<feature type="compositionally biased region" description="Low complexity" evidence="4">
    <location>
        <begin position="169"/>
        <end position="191"/>
    </location>
</feature>
<feature type="compositionally biased region" description="Gly residues" evidence="4">
    <location>
        <begin position="204"/>
        <end position="218"/>
    </location>
</feature>
<feature type="compositionally biased region" description="Low complexity" evidence="4">
    <location>
        <begin position="298"/>
        <end position="307"/>
    </location>
</feature>
<feature type="compositionally biased region" description="Gly residues" evidence="4">
    <location>
        <begin position="329"/>
        <end position="338"/>
    </location>
</feature>
<feature type="compositionally biased region" description="Gly residues" evidence="4">
    <location>
        <begin position="412"/>
        <end position="421"/>
    </location>
</feature>
<feature type="compositionally biased region" description="Low complexity" evidence="4">
    <location>
        <begin position="470"/>
        <end position="507"/>
    </location>
</feature>
<feature type="compositionally biased region" description="Low complexity" evidence="4">
    <location>
        <begin position="548"/>
        <end position="557"/>
    </location>
</feature>
<feature type="compositionally biased region" description="Pro residues" evidence="4">
    <location>
        <begin position="559"/>
        <end position="579"/>
    </location>
</feature>
<feature type="sequence conflict" description="In Ref. 4; AAH11061." evidence="8" ref="4">
    <original>V</original>
    <variation>L</variation>
    <location>
        <position position="3"/>
    </location>
</feature>
<feature type="sequence conflict" description="In Ref. 1; CAA47387." evidence="8" ref="1">
    <original>R</original>
    <variation>G</variation>
    <location>
        <position position="6"/>
    </location>
</feature>
<feature type="sequence conflict" description="In Ref. 1; CAA47387." evidence="8" ref="1">
    <original>H</original>
    <variation>Y</variation>
    <location>
        <position position="85"/>
    </location>
</feature>
<feature type="sequence conflict" description="In Ref. 1; CAA47387." evidence="8" ref="1">
    <location>
        <position position="110"/>
    </location>
</feature>
<feature type="sequence conflict" description="In Ref. 1; CAA47387." evidence="8" ref="1">
    <original>P</original>
    <variation>L</variation>
    <location>
        <position position="249"/>
    </location>
</feature>
<feature type="sequence conflict" description="In Ref. 2; BAB31383." evidence="8" ref="2">
    <original>P</original>
    <variation>A</variation>
    <location>
        <position position="314"/>
    </location>
</feature>
<feature type="sequence conflict" description="In Ref. 1; CAA47387." evidence="8" ref="1">
    <original>IP</original>
    <variation>SR</variation>
    <location>
        <begin position="324"/>
        <end position="325"/>
    </location>
</feature>
<feature type="sequence conflict" description="In Ref. 1; CAA47387." evidence="8" ref="1">
    <original>D</original>
    <variation>H</variation>
    <location>
        <position position="362"/>
    </location>
</feature>
<feature type="sequence conflict" description="In Ref. 1; CAA47387." evidence="8" ref="1">
    <original>P</original>
    <variation>T</variation>
    <location>
        <position position="597"/>
    </location>
</feature>
<feature type="sequence conflict" description="In Ref. 2; BAE35169." evidence="8" ref="2">
    <original>F</original>
    <variation>L</variation>
    <location>
        <position position="635"/>
    </location>
</feature>
<feature type="sequence conflict" description="In Ref. 1; CAA47387." evidence="8" ref="1">
    <original>MPS</original>
    <variation>NPF</variation>
    <location>
        <begin position="718"/>
        <end position="720"/>
    </location>
</feature>
<feature type="strand" evidence="9">
    <location>
        <begin position="617"/>
        <end position="622"/>
    </location>
</feature>
<feature type="strand" evidence="9">
    <location>
        <begin position="637"/>
        <end position="642"/>
    </location>
</feature>
<feature type="turn" evidence="9">
    <location>
        <begin position="648"/>
        <end position="650"/>
    </location>
</feature>
<feature type="strand" evidence="9">
    <location>
        <begin position="659"/>
        <end position="680"/>
    </location>
</feature>
<feature type="strand" evidence="9">
    <location>
        <begin position="683"/>
        <end position="690"/>
    </location>
</feature>
<feature type="strand" evidence="9">
    <location>
        <begin position="698"/>
        <end position="708"/>
    </location>
</feature>
<feature type="strand" evidence="9">
    <location>
        <begin position="713"/>
        <end position="717"/>
    </location>
</feature>
<feature type="helix" evidence="9">
    <location>
        <begin position="721"/>
        <end position="723"/>
    </location>
</feature>
<feature type="strand" evidence="9">
    <location>
        <begin position="724"/>
        <end position="727"/>
    </location>
</feature>
<feature type="strand" evidence="9">
    <location>
        <begin position="734"/>
        <end position="743"/>
    </location>
</feature>
<proteinExistence type="evidence at protein level"/>
<accession>Q00780</accession>
<accession>B8JJL9</accession>
<accession>Q3TWU7</accession>
<accession>Q8BGL6</accession>
<accession>Q921S8</accession>
<accession>Q9D2V4</accession>
<name>CO8A1_MOUSE</name>
<evidence type="ECO:0000250" key="1"/>
<evidence type="ECO:0000255" key="2"/>
<evidence type="ECO:0000255" key="3">
    <source>
        <dbReference type="PROSITE-ProRule" id="PRU00368"/>
    </source>
</evidence>
<evidence type="ECO:0000256" key="4">
    <source>
        <dbReference type="SAM" id="MobiDB-lite"/>
    </source>
</evidence>
<evidence type="ECO:0000269" key="5">
    <source>
    </source>
</evidence>
<evidence type="ECO:0000269" key="6">
    <source>
    </source>
</evidence>
<evidence type="ECO:0000269" key="7">
    <source>
    </source>
</evidence>
<evidence type="ECO:0000305" key="8"/>
<evidence type="ECO:0007829" key="9">
    <source>
        <dbReference type="PDB" id="1O91"/>
    </source>
</evidence>
<protein>
    <recommendedName>
        <fullName>Collagen alpha-1(VIII) chain</fullName>
    </recommendedName>
    <component>
        <recommendedName>
            <fullName>Vastatin</fullName>
        </recommendedName>
    </component>
</protein>
<dbReference type="EMBL" id="X66976">
    <property type="protein sequence ID" value="CAA47387.1"/>
    <property type="molecule type" value="Genomic_DNA"/>
</dbReference>
<dbReference type="EMBL" id="X66977">
    <property type="protein sequence ID" value="CAA47387.1"/>
    <property type="status" value="JOINED"/>
    <property type="molecule type" value="Genomic_DNA"/>
</dbReference>
<dbReference type="EMBL" id="AK018742">
    <property type="protein sequence ID" value="BAB31383.1"/>
    <property type="molecule type" value="mRNA"/>
</dbReference>
<dbReference type="EMBL" id="AK032048">
    <property type="protein sequence ID" value="BAC27670.1"/>
    <property type="molecule type" value="mRNA"/>
</dbReference>
<dbReference type="EMBL" id="AK046370">
    <property type="protein sequence ID" value="BAC32693.1"/>
    <property type="molecule type" value="mRNA"/>
</dbReference>
<dbReference type="EMBL" id="AK159542">
    <property type="protein sequence ID" value="BAE35169.1"/>
    <property type="molecule type" value="mRNA"/>
</dbReference>
<dbReference type="EMBL" id="CT025753">
    <property type="status" value="NOT_ANNOTATED_CDS"/>
    <property type="molecule type" value="Genomic_DNA"/>
</dbReference>
<dbReference type="EMBL" id="BC011061">
    <property type="protein sequence ID" value="AAH11061.1"/>
    <property type="molecule type" value="mRNA"/>
</dbReference>
<dbReference type="CCDS" id="CCDS37367.1"/>
<dbReference type="PIR" id="S23779">
    <property type="entry name" value="S23779"/>
</dbReference>
<dbReference type="RefSeq" id="NP_031765.2">
    <property type="nucleotide sequence ID" value="NM_007739.2"/>
</dbReference>
<dbReference type="PDB" id="1O91">
    <property type="method" value="X-ray"/>
    <property type="resolution" value="1.90 A"/>
    <property type="chains" value="A/B/C=573-744"/>
</dbReference>
<dbReference type="PDBsum" id="1O91"/>
<dbReference type="SMR" id="Q00780"/>
<dbReference type="BioGRID" id="198827">
    <property type="interactions" value="2"/>
</dbReference>
<dbReference type="ComplexPortal" id="CPX-2967">
    <property type="entry name" value="Collagen type VIII trimer variant I"/>
</dbReference>
<dbReference type="ComplexPortal" id="CPX-2968">
    <property type="entry name" value="Collagen type VIII trimer variant 2"/>
</dbReference>
<dbReference type="FunCoup" id="Q00780">
    <property type="interactions" value="314"/>
</dbReference>
<dbReference type="STRING" id="10090.ENSMUSP00000086745"/>
<dbReference type="GlyGen" id="Q00780">
    <property type="glycosylation" value="1 site"/>
</dbReference>
<dbReference type="iPTMnet" id="Q00780"/>
<dbReference type="PhosphoSitePlus" id="Q00780"/>
<dbReference type="PaxDb" id="10090-ENSMUSP00000086745"/>
<dbReference type="PeptideAtlas" id="Q00780"/>
<dbReference type="ProteomicsDB" id="283672"/>
<dbReference type="Pumba" id="Q00780"/>
<dbReference type="Antibodypedia" id="32194">
    <property type="antibodies" value="196 antibodies from 28 providers"/>
</dbReference>
<dbReference type="DNASU" id="12837"/>
<dbReference type="Ensembl" id="ENSMUST00000089332.5">
    <property type="protein sequence ID" value="ENSMUSP00000086745.5"/>
    <property type="gene ID" value="ENSMUSG00000068196.6"/>
</dbReference>
<dbReference type="GeneID" id="12837"/>
<dbReference type="KEGG" id="mmu:12837"/>
<dbReference type="UCSC" id="uc007znl.1">
    <property type="organism name" value="mouse"/>
</dbReference>
<dbReference type="AGR" id="MGI:88463"/>
<dbReference type="CTD" id="1295"/>
<dbReference type="MGI" id="MGI:88463">
    <property type="gene designation" value="Col8a1"/>
</dbReference>
<dbReference type="VEuPathDB" id="HostDB:ENSMUSG00000068196"/>
<dbReference type="eggNOG" id="ENOG502QRFR">
    <property type="taxonomic scope" value="Eukaryota"/>
</dbReference>
<dbReference type="GeneTree" id="ENSGT00940000158272"/>
<dbReference type="HOGENOM" id="CLU_001074_21_0_1"/>
<dbReference type="InParanoid" id="Q00780"/>
<dbReference type="OMA" id="PMGKEMP"/>
<dbReference type="OrthoDB" id="6139560at2759"/>
<dbReference type="PhylomeDB" id="Q00780"/>
<dbReference type="TreeFam" id="TF334029"/>
<dbReference type="Reactome" id="R-MMU-1442490">
    <property type="pathway name" value="Collagen degradation"/>
</dbReference>
<dbReference type="Reactome" id="R-MMU-1650814">
    <property type="pathway name" value="Collagen biosynthesis and modifying enzymes"/>
</dbReference>
<dbReference type="Reactome" id="R-MMU-2022090">
    <property type="pathway name" value="Assembly of collagen fibrils and other multimeric structures"/>
</dbReference>
<dbReference type="Reactome" id="R-MMU-216083">
    <property type="pathway name" value="Integrin cell surface interactions"/>
</dbReference>
<dbReference type="Reactome" id="R-MMU-8948216">
    <property type="pathway name" value="Collagen chain trimerization"/>
</dbReference>
<dbReference type="BioGRID-ORCS" id="12837">
    <property type="hits" value="4 hits in 79 CRISPR screens"/>
</dbReference>
<dbReference type="ChiTaRS" id="Col8a1">
    <property type="organism name" value="mouse"/>
</dbReference>
<dbReference type="EvolutionaryTrace" id="Q00780"/>
<dbReference type="PRO" id="PR:Q00780"/>
<dbReference type="Proteomes" id="UP000000589">
    <property type="component" value="Chromosome 16"/>
</dbReference>
<dbReference type="RNAct" id="Q00780">
    <property type="molecule type" value="protein"/>
</dbReference>
<dbReference type="Bgee" id="ENSMUSG00000068196">
    <property type="expression patterns" value="Expressed in pineal body and 230 other cell types or tissues"/>
</dbReference>
<dbReference type="GO" id="GO:0005604">
    <property type="term" value="C:basement membrane"/>
    <property type="evidence" value="ECO:0007669"/>
    <property type="project" value="UniProtKB-SubCell"/>
</dbReference>
<dbReference type="GO" id="GO:0005581">
    <property type="term" value="C:collagen trimer"/>
    <property type="evidence" value="ECO:0007669"/>
    <property type="project" value="UniProtKB-KW"/>
</dbReference>
<dbReference type="GO" id="GO:0062023">
    <property type="term" value="C:collagen-containing extracellular matrix"/>
    <property type="evidence" value="ECO:0007005"/>
    <property type="project" value="BHF-UCL"/>
</dbReference>
<dbReference type="GO" id="GO:0005615">
    <property type="term" value="C:extracellular space"/>
    <property type="evidence" value="ECO:0007005"/>
    <property type="project" value="BHF-UCL"/>
</dbReference>
<dbReference type="GO" id="GO:0001525">
    <property type="term" value="P:angiogenesis"/>
    <property type="evidence" value="ECO:0007669"/>
    <property type="project" value="UniProtKB-KW"/>
</dbReference>
<dbReference type="GO" id="GO:0048593">
    <property type="term" value="P:camera-type eye morphogenesis"/>
    <property type="evidence" value="ECO:0000316"/>
    <property type="project" value="MGI"/>
</dbReference>
<dbReference type="GO" id="GO:0007155">
    <property type="term" value="P:cell adhesion"/>
    <property type="evidence" value="ECO:0007669"/>
    <property type="project" value="UniProtKB-KW"/>
</dbReference>
<dbReference type="GO" id="GO:0035987">
    <property type="term" value="P:endodermal cell differentiation"/>
    <property type="evidence" value="ECO:0007669"/>
    <property type="project" value="Ensembl"/>
</dbReference>
<dbReference type="GO" id="GO:0001935">
    <property type="term" value="P:endothelial cell proliferation"/>
    <property type="evidence" value="ECO:0000316"/>
    <property type="project" value="MGI"/>
</dbReference>
<dbReference type="GO" id="GO:0010811">
    <property type="term" value="P:positive regulation of cell-substrate adhesion"/>
    <property type="evidence" value="ECO:0000314"/>
    <property type="project" value="MGI"/>
</dbReference>
<dbReference type="DisProt" id="DP02369"/>
<dbReference type="FunFam" id="2.60.120.40:FF:000001">
    <property type="entry name" value="Complement C1q B chain"/>
    <property type="match status" value="1"/>
</dbReference>
<dbReference type="Gene3D" id="2.60.120.40">
    <property type="match status" value="1"/>
</dbReference>
<dbReference type="InterPro" id="IPR001073">
    <property type="entry name" value="C1q_dom"/>
</dbReference>
<dbReference type="InterPro" id="IPR008160">
    <property type="entry name" value="Collagen"/>
</dbReference>
<dbReference type="InterPro" id="IPR050938">
    <property type="entry name" value="Collagen_Structural_Proteins"/>
</dbReference>
<dbReference type="InterPro" id="IPR008983">
    <property type="entry name" value="Tumour_necrosis_fac-like_dom"/>
</dbReference>
<dbReference type="PANTHER" id="PTHR37456:SF6">
    <property type="entry name" value="COLLAGEN ALPHA-1(XXIII) CHAIN-LIKE ISOFORM X2"/>
    <property type="match status" value="1"/>
</dbReference>
<dbReference type="PANTHER" id="PTHR37456">
    <property type="entry name" value="SI:CH211-266K2.1"/>
    <property type="match status" value="1"/>
</dbReference>
<dbReference type="Pfam" id="PF00386">
    <property type="entry name" value="C1q"/>
    <property type="match status" value="1"/>
</dbReference>
<dbReference type="Pfam" id="PF01391">
    <property type="entry name" value="Collagen"/>
    <property type="match status" value="2"/>
</dbReference>
<dbReference type="PRINTS" id="PR00007">
    <property type="entry name" value="COMPLEMNTC1Q"/>
</dbReference>
<dbReference type="SMART" id="SM00110">
    <property type="entry name" value="C1Q"/>
    <property type="match status" value="1"/>
</dbReference>
<dbReference type="SUPFAM" id="SSF49842">
    <property type="entry name" value="TNF-like"/>
    <property type="match status" value="1"/>
</dbReference>
<dbReference type="PROSITE" id="PS50871">
    <property type="entry name" value="C1Q"/>
    <property type="match status" value="1"/>
</dbReference>
<gene>
    <name type="primary">Col8a1</name>
</gene>
<keyword id="KW-0002">3D-structure</keyword>
<keyword id="KW-0037">Angiogenesis</keyword>
<keyword id="KW-0084">Basement membrane</keyword>
<keyword id="KW-0130">Cell adhesion</keyword>
<keyword id="KW-0176">Collagen</keyword>
<keyword id="KW-0272">Extracellular matrix</keyword>
<keyword id="KW-0379">Hydroxylation</keyword>
<keyword id="KW-1185">Reference proteome</keyword>
<keyword id="KW-0677">Repeat</keyword>
<keyword id="KW-0964">Secreted</keyword>
<keyword id="KW-0732">Signal</keyword>
<reference key="1">
    <citation type="journal article" date="1992" name="Eur. J. Biochem.">
        <title>Alpha 1(VIII)-collagen gene transcripts encode a short-chain collagen polypeptide and are expressed by various epithelial, endothelial and mesenchymal cells in newborn mouse tissues.</title>
        <authorList>
            <person name="Muragaki Y."/>
            <person name="Shiota C."/>
            <person name="Inoue M."/>
            <person name="Ooshima A."/>
            <person name="Olsen B.R."/>
            <person name="Ninomiya Y."/>
        </authorList>
    </citation>
    <scope>NUCLEOTIDE SEQUENCE [GENOMIC DNA]</scope>
    <source>
        <strain>BALB/cJ</strain>
    </source>
</reference>
<reference key="2">
    <citation type="journal article" date="2005" name="Science">
        <title>The transcriptional landscape of the mammalian genome.</title>
        <authorList>
            <person name="Carninci P."/>
            <person name="Kasukawa T."/>
            <person name="Katayama S."/>
            <person name="Gough J."/>
            <person name="Frith M.C."/>
            <person name="Maeda N."/>
            <person name="Oyama R."/>
            <person name="Ravasi T."/>
            <person name="Lenhard B."/>
            <person name="Wells C."/>
            <person name="Kodzius R."/>
            <person name="Shimokawa K."/>
            <person name="Bajic V.B."/>
            <person name="Brenner S.E."/>
            <person name="Batalov S."/>
            <person name="Forrest A.R."/>
            <person name="Zavolan M."/>
            <person name="Davis M.J."/>
            <person name="Wilming L.G."/>
            <person name="Aidinis V."/>
            <person name="Allen J.E."/>
            <person name="Ambesi-Impiombato A."/>
            <person name="Apweiler R."/>
            <person name="Aturaliya R.N."/>
            <person name="Bailey T.L."/>
            <person name="Bansal M."/>
            <person name="Baxter L."/>
            <person name="Beisel K.W."/>
            <person name="Bersano T."/>
            <person name="Bono H."/>
            <person name="Chalk A.M."/>
            <person name="Chiu K.P."/>
            <person name="Choudhary V."/>
            <person name="Christoffels A."/>
            <person name="Clutterbuck D.R."/>
            <person name="Crowe M.L."/>
            <person name="Dalla E."/>
            <person name="Dalrymple B.P."/>
            <person name="de Bono B."/>
            <person name="Della Gatta G."/>
            <person name="di Bernardo D."/>
            <person name="Down T."/>
            <person name="Engstrom P."/>
            <person name="Fagiolini M."/>
            <person name="Faulkner G."/>
            <person name="Fletcher C.F."/>
            <person name="Fukushima T."/>
            <person name="Furuno M."/>
            <person name="Futaki S."/>
            <person name="Gariboldi M."/>
            <person name="Georgii-Hemming P."/>
            <person name="Gingeras T.R."/>
            <person name="Gojobori T."/>
            <person name="Green R.E."/>
            <person name="Gustincich S."/>
            <person name="Harbers M."/>
            <person name="Hayashi Y."/>
            <person name="Hensch T.K."/>
            <person name="Hirokawa N."/>
            <person name="Hill D."/>
            <person name="Huminiecki L."/>
            <person name="Iacono M."/>
            <person name="Ikeo K."/>
            <person name="Iwama A."/>
            <person name="Ishikawa T."/>
            <person name="Jakt M."/>
            <person name="Kanapin A."/>
            <person name="Katoh M."/>
            <person name="Kawasawa Y."/>
            <person name="Kelso J."/>
            <person name="Kitamura H."/>
            <person name="Kitano H."/>
            <person name="Kollias G."/>
            <person name="Krishnan S.P."/>
            <person name="Kruger A."/>
            <person name="Kummerfeld S.K."/>
            <person name="Kurochkin I.V."/>
            <person name="Lareau L.F."/>
            <person name="Lazarevic D."/>
            <person name="Lipovich L."/>
            <person name="Liu J."/>
            <person name="Liuni S."/>
            <person name="McWilliam S."/>
            <person name="Madan Babu M."/>
            <person name="Madera M."/>
            <person name="Marchionni L."/>
            <person name="Matsuda H."/>
            <person name="Matsuzawa S."/>
            <person name="Miki H."/>
            <person name="Mignone F."/>
            <person name="Miyake S."/>
            <person name="Morris K."/>
            <person name="Mottagui-Tabar S."/>
            <person name="Mulder N."/>
            <person name="Nakano N."/>
            <person name="Nakauchi H."/>
            <person name="Ng P."/>
            <person name="Nilsson R."/>
            <person name="Nishiguchi S."/>
            <person name="Nishikawa S."/>
            <person name="Nori F."/>
            <person name="Ohara O."/>
            <person name="Okazaki Y."/>
            <person name="Orlando V."/>
            <person name="Pang K.C."/>
            <person name="Pavan W.J."/>
            <person name="Pavesi G."/>
            <person name="Pesole G."/>
            <person name="Petrovsky N."/>
            <person name="Piazza S."/>
            <person name="Reed J."/>
            <person name="Reid J.F."/>
            <person name="Ring B.Z."/>
            <person name="Ringwald M."/>
            <person name="Rost B."/>
            <person name="Ruan Y."/>
            <person name="Salzberg S.L."/>
            <person name="Sandelin A."/>
            <person name="Schneider C."/>
            <person name="Schoenbach C."/>
            <person name="Sekiguchi K."/>
            <person name="Semple C.A."/>
            <person name="Seno S."/>
            <person name="Sessa L."/>
            <person name="Sheng Y."/>
            <person name="Shibata Y."/>
            <person name="Shimada H."/>
            <person name="Shimada K."/>
            <person name="Silva D."/>
            <person name="Sinclair B."/>
            <person name="Sperling S."/>
            <person name="Stupka E."/>
            <person name="Sugiura K."/>
            <person name="Sultana R."/>
            <person name="Takenaka Y."/>
            <person name="Taki K."/>
            <person name="Tammoja K."/>
            <person name="Tan S.L."/>
            <person name="Tang S."/>
            <person name="Taylor M.S."/>
            <person name="Tegner J."/>
            <person name="Teichmann S.A."/>
            <person name="Ueda H.R."/>
            <person name="van Nimwegen E."/>
            <person name="Verardo R."/>
            <person name="Wei C.L."/>
            <person name="Yagi K."/>
            <person name="Yamanishi H."/>
            <person name="Zabarovsky E."/>
            <person name="Zhu S."/>
            <person name="Zimmer A."/>
            <person name="Hide W."/>
            <person name="Bult C."/>
            <person name="Grimmond S.M."/>
            <person name="Teasdale R.D."/>
            <person name="Liu E.T."/>
            <person name="Brusic V."/>
            <person name="Quackenbush J."/>
            <person name="Wahlestedt C."/>
            <person name="Mattick J.S."/>
            <person name="Hume D.A."/>
            <person name="Kai C."/>
            <person name="Sasaki D."/>
            <person name="Tomaru Y."/>
            <person name="Fukuda S."/>
            <person name="Kanamori-Katayama M."/>
            <person name="Suzuki M."/>
            <person name="Aoki J."/>
            <person name="Arakawa T."/>
            <person name="Iida J."/>
            <person name="Imamura K."/>
            <person name="Itoh M."/>
            <person name="Kato T."/>
            <person name="Kawaji H."/>
            <person name="Kawagashira N."/>
            <person name="Kawashima T."/>
            <person name="Kojima M."/>
            <person name="Kondo S."/>
            <person name="Konno H."/>
            <person name="Nakano K."/>
            <person name="Ninomiya N."/>
            <person name="Nishio T."/>
            <person name="Okada M."/>
            <person name="Plessy C."/>
            <person name="Shibata K."/>
            <person name="Shiraki T."/>
            <person name="Suzuki S."/>
            <person name="Tagami M."/>
            <person name="Waki K."/>
            <person name="Watahiki A."/>
            <person name="Okamura-Oho Y."/>
            <person name="Suzuki H."/>
            <person name="Kawai J."/>
            <person name="Hayashizaki Y."/>
        </authorList>
    </citation>
    <scope>NUCLEOTIDE SEQUENCE [LARGE SCALE MRNA]</scope>
    <source>
        <strain>C57BL/6J</strain>
        <tissue>Corpora quadrigemina</tissue>
        <tissue>Kidney</tissue>
        <tissue>Medulla oblongata</tissue>
    </source>
</reference>
<reference key="3">
    <citation type="journal article" date="2009" name="PLoS Biol.">
        <title>Lineage-specific biology revealed by a finished genome assembly of the mouse.</title>
        <authorList>
            <person name="Church D.M."/>
            <person name="Goodstadt L."/>
            <person name="Hillier L.W."/>
            <person name="Zody M.C."/>
            <person name="Goldstein S."/>
            <person name="She X."/>
            <person name="Bult C.J."/>
            <person name="Agarwala R."/>
            <person name="Cherry J.L."/>
            <person name="DiCuccio M."/>
            <person name="Hlavina W."/>
            <person name="Kapustin Y."/>
            <person name="Meric P."/>
            <person name="Maglott D."/>
            <person name="Birtle Z."/>
            <person name="Marques A.C."/>
            <person name="Graves T."/>
            <person name="Zhou S."/>
            <person name="Teague B."/>
            <person name="Potamousis K."/>
            <person name="Churas C."/>
            <person name="Place M."/>
            <person name="Herschleb J."/>
            <person name="Runnheim R."/>
            <person name="Forrest D."/>
            <person name="Amos-Landgraf J."/>
            <person name="Schwartz D.C."/>
            <person name="Cheng Z."/>
            <person name="Lindblad-Toh K."/>
            <person name="Eichler E.E."/>
            <person name="Ponting C.P."/>
        </authorList>
    </citation>
    <scope>NUCLEOTIDE SEQUENCE [LARGE SCALE GENOMIC DNA]</scope>
    <source>
        <strain>C57BL/6J</strain>
    </source>
</reference>
<reference key="4">
    <citation type="journal article" date="2004" name="Genome Res.">
        <title>The status, quality, and expansion of the NIH full-length cDNA project: the Mammalian Gene Collection (MGC).</title>
        <authorList>
            <consortium name="The MGC Project Team"/>
        </authorList>
    </citation>
    <scope>NUCLEOTIDE SEQUENCE [LARGE SCALE MRNA]</scope>
    <source>
        <strain>FVB/N</strain>
        <tissue>Mammary gland</tissue>
    </source>
</reference>
<reference key="5">
    <citation type="journal article" date="2004" name="Biochem. Biophys. Res. Commun.">
        <title>Astrocytes express type VIII collagen during the repair process of brain cold injury.</title>
        <authorList>
            <person name="Hirano S."/>
            <person name="Yonezawa T."/>
            <person name="Hasegawa H."/>
            <person name="Hattori S."/>
            <person name="Greenhill N.S."/>
            <person name="Davis P.F."/>
            <person name="Sage E.H."/>
            <person name="Ninomiya Y."/>
        </authorList>
    </citation>
    <scope>TISSUE SPECIFICITY</scope>
    <scope>FUNCTION</scope>
    <scope>INDUCTION</scope>
</reference>
<reference key="6">
    <citation type="journal article" date="2006" name="Arterioscler. Thromb. Vasc. Biol.">
        <title>Migration and growth are attenuated in vascular smooth muscle cells with type VIII collagen-null alleles.</title>
        <authorList>
            <person name="Adiguzel E."/>
            <person name="Hou G."/>
            <person name="Mulholland D."/>
            <person name="Hopfer U."/>
            <person name="Fukai N."/>
            <person name="Olsen B."/>
            <person name="Bendeck M."/>
        </authorList>
    </citation>
    <scope>FUNCTION</scope>
</reference>
<reference key="7">
    <citation type="journal article" date="2009" name="Diabetes">
        <title>Lack of type VIII collagen in mice ameliorates diabetic nephropathy.</title>
        <authorList>
            <person name="Hopfer U."/>
            <person name="Hopfer H."/>
            <person name="Meyer-Schwesinger C."/>
            <person name="Loeffler I."/>
            <person name="Fukai N."/>
            <person name="Olsen B.R."/>
            <person name="Stahl R.A."/>
            <person name="Wolf G."/>
        </authorList>
    </citation>
    <scope>TISSUE SPECIFICITY</scope>
    <scope>DISRUPTION PHENOTYPE</scope>
    <scope>FUNCTION</scope>
    <scope>INDUCTION</scope>
</reference>
<reference key="8">
    <citation type="journal article" date="2003" name="Matrix Biol.">
        <title>Crystal structure of the collagen alpha1(VIII) NC1 trimer.</title>
        <authorList>
            <person name="Kvansakul M."/>
            <person name="Bogin O."/>
            <person name="Hohenester E."/>
            <person name="Yayon A."/>
        </authorList>
    </citation>
    <scope>X-RAY CRYSTALLOGRAPHY (1.9 ANGSTROMS) OF 573-744</scope>
</reference>
<sequence>MAVPPRPLQLLGILFIISLNSVRLIQAGAYYGIKPLPPQIPPQIPPQIPQYQPLGQQVPHMPLGKDGLSMGKEMPHMQYGKEYPHLPQYMKEIPPVPRMGKEVVPKKGKGEVPLASLRGEQGPRGEPGPRGPPGPPGLPGHGMPGIKGKPGPQGYPGIGKPGMPGMPGKPGAMGMPGAKGEIGPKGEIGPMGIPGPQGPPGPHGLPGIGKPGGPGLPGQPGAKGERGPKGPPGPPGLQGPKGEKGFGMPGLPGLKGPPGMHGPPGPVGLPGVGKPGVTGFPGPQGPLGKPGPPGEPGPQGLIGVPGVQGPPGMPGVGKPGQDGIPGQPGFPGGKGEQGLPGLPGPPGLPGVGKPGFPGPKGDRGIGGVPGVLGPRGEKGPIGAPGMGGPPGEPGLPGIPGPMGPPGAIGFPGPKGEGGVVGPQGPPGPKGEPGLQGFPGKPGFLGEVGPPGMRGLPGPIGPKGEGGHKGLPGLPGVPGLLGPKGEPGIPGDQGLQGPPGIPGIVGPSGPIGPPGIPGPKGEPGLPGPPGFPGVGKPGVAGLHGPPGKPGALGPQGQPGLPGPPGPPGPPGPPAVMPTPSPQGEYLPDMGLGIDGVKPPHAYAGKKGKHGGPAYEMPAFTAELTVPFPPVGAPVKFDKLLYNGRQNYNPQTGIFTCEVPGVYYFAYHVHCKGGNVWVALFKNNEPMMYTYDEYKKGFLDQASGSAVLLLRPGDQVFLQMPSEQAAGLYAGQYVHSSFSGYLLYPM</sequence>
<organism>
    <name type="scientific">Mus musculus</name>
    <name type="common">Mouse</name>
    <dbReference type="NCBI Taxonomy" id="10090"/>
    <lineage>
        <taxon>Eukaryota</taxon>
        <taxon>Metazoa</taxon>
        <taxon>Chordata</taxon>
        <taxon>Craniata</taxon>
        <taxon>Vertebrata</taxon>
        <taxon>Euteleostomi</taxon>
        <taxon>Mammalia</taxon>
        <taxon>Eutheria</taxon>
        <taxon>Euarchontoglires</taxon>
        <taxon>Glires</taxon>
        <taxon>Rodentia</taxon>
        <taxon>Myomorpha</taxon>
        <taxon>Muroidea</taxon>
        <taxon>Muridae</taxon>
        <taxon>Murinae</taxon>
        <taxon>Mus</taxon>
        <taxon>Mus</taxon>
    </lineage>
</organism>